<sequence length="172" mass="20105">MPGIVELPTLEELKVDEVKISSAVLKAAAHHYGAQCDKPNKEFMLCRWEEKDPRRCLEEGKLVNKCALDFFRQIKRHCAEPFTEYWTCIDYTGQQLFRHCRKQQAKFDECVLDKLGWVRPDLGELSKVTKVKTDRPLPENPYHSRPRPDPSPEIEGDLQPATHGSRFYFWTK</sequence>
<accession>Q0MQB1</accession>
<feature type="chain" id="PRO_0000251809" description="NADH dehydrogenase [ubiquinone] 1 alpha subcomplex subunit 8">
    <location>
        <begin position="1"/>
        <end position="172"/>
    </location>
</feature>
<feature type="domain" description="CHCH 1" evidence="2">
    <location>
        <begin position="33"/>
        <end position="74"/>
    </location>
</feature>
<feature type="domain" description="CHCH 2" evidence="2">
    <location>
        <begin position="75"/>
        <end position="118"/>
    </location>
</feature>
<feature type="region of interest" description="Disordered" evidence="3">
    <location>
        <begin position="133"/>
        <end position="164"/>
    </location>
</feature>
<feature type="short sequence motif" description="Cx9C motif 1" evidence="2">
    <location>
        <begin position="36"/>
        <end position="46"/>
    </location>
</feature>
<feature type="short sequence motif" description="Cx9C motif 2" evidence="2">
    <location>
        <begin position="56"/>
        <end position="66"/>
    </location>
</feature>
<feature type="short sequence motif" description="Cx9C motif 3" evidence="2">
    <location>
        <begin position="78"/>
        <end position="88"/>
    </location>
</feature>
<feature type="short sequence motif" description="Cx9C motif 4" evidence="2">
    <location>
        <begin position="100"/>
        <end position="110"/>
    </location>
</feature>
<feature type="disulfide bond" evidence="2">
    <location>
        <begin position="36"/>
        <end position="66"/>
    </location>
</feature>
<feature type="disulfide bond" evidence="2">
    <location>
        <begin position="46"/>
        <end position="56"/>
    </location>
</feature>
<feature type="disulfide bond" evidence="2">
    <location>
        <begin position="78"/>
        <end position="110"/>
    </location>
</feature>
<feature type="disulfide bond" evidence="2">
    <location>
        <begin position="88"/>
        <end position="100"/>
    </location>
</feature>
<proteinExistence type="evidence at transcript level"/>
<keyword id="KW-1015">Disulfide bond</keyword>
<keyword id="KW-0249">Electron transport</keyword>
<keyword id="KW-0472">Membrane</keyword>
<keyword id="KW-0496">Mitochondrion</keyword>
<keyword id="KW-0999">Mitochondrion inner membrane</keyword>
<keyword id="KW-1185">Reference proteome</keyword>
<keyword id="KW-0677">Repeat</keyword>
<keyword id="KW-0679">Respiratory chain</keyword>
<keyword id="KW-0813">Transport</keyword>
<comment type="function">
    <text evidence="1">Accessory subunit of the mitochondrial membrane respiratory chain NADH dehydrogenase (Complex I), that is believed not to be involved in catalysis. Complex I functions in the transfer of electrons from NADH to the respiratory chain. The immediate electron acceptor for the enzyme is believed to be ubiquinone.</text>
</comment>
<comment type="subunit">
    <text evidence="1">Complex I is composed of 45 different subunits.</text>
</comment>
<comment type="subcellular location">
    <subcellularLocation>
        <location evidence="1">Mitochondrion inner membrane</location>
        <topology evidence="1">Peripheral membrane protein</topology>
    </subcellularLocation>
    <subcellularLocation>
        <location evidence="1">Mitochondrion intermembrane space</location>
    </subcellularLocation>
    <subcellularLocation>
        <location evidence="1">Mitochondrion</location>
    </subcellularLocation>
</comment>
<comment type="domain">
    <text evidence="1">Contains four C-X9-C motifs that are predicted to form a helix-coil-helix structure, permitting the formation of intramolecular disulfide bonds.</text>
</comment>
<comment type="similarity">
    <text evidence="4">Belongs to the complex I NDUFA8 subunit family.</text>
</comment>
<evidence type="ECO:0000250" key="1">
    <source>
        <dbReference type="UniProtKB" id="P51970"/>
    </source>
</evidence>
<evidence type="ECO:0000255" key="2">
    <source>
        <dbReference type="PROSITE-ProRule" id="PRU01150"/>
    </source>
</evidence>
<evidence type="ECO:0000256" key="3">
    <source>
        <dbReference type="SAM" id="MobiDB-lite"/>
    </source>
</evidence>
<evidence type="ECO:0000305" key="4"/>
<reference key="1">
    <citation type="journal article" date="2006" name="Gene">
        <title>Adaptive selection of mitochondrial complex I subunits during primate radiation.</title>
        <authorList>
            <person name="Mishmar D."/>
            <person name="Ruiz-Pesini E."/>
            <person name="Mondragon-Palomino M."/>
            <person name="Procaccio V."/>
            <person name="Gaut B."/>
            <person name="Wallace D.C."/>
        </authorList>
    </citation>
    <scope>NUCLEOTIDE SEQUENCE [MRNA]</scope>
</reference>
<dbReference type="EMBL" id="DQ885723">
    <property type="protein sequence ID" value="ABH12232.1"/>
    <property type="molecule type" value="mRNA"/>
</dbReference>
<dbReference type="RefSeq" id="NP_001065268.1">
    <property type="nucleotide sequence ID" value="NM_001071800.1"/>
</dbReference>
<dbReference type="SMR" id="Q0MQB1"/>
<dbReference type="FunCoup" id="Q0MQB1">
    <property type="interactions" value="1501"/>
</dbReference>
<dbReference type="STRING" id="9598.ENSPTRP00000036436"/>
<dbReference type="PaxDb" id="9598-ENSPTRP00000036436"/>
<dbReference type="Ensembl" id="ENSPTRT00000039432.2">
    <property type="protein sequence ID" value="ENSPTRP00000036436.1"/>
    <property type="gene ID" value="ENSPTRG00000021319.2"/>
</dbReference>
<dbReference type="GeneID" id="464897"/>
<dbReference type="KEGG" id="ptr:464897"/>
<dbReference type="CTD" id="4702"/>
<dbReference type="VGNC" id="VGNC:4799">
    <property type="gene designation" value="NDUFA8"/>
</dbReference>
<dbReference type="eggNOG" id="KOG3458">
    <property type="taxonomic scope" value="Eukaryota"/>
</dbReference>
<dbReference type="GeneTree" id="ENSGT00390000008938"/>
<dbReference type="HOGENOM" id="CLU_081931_2_1_1"/>
<dbReference type="InParanoid" id="Q0MQB1"/>
<dbReference type="OMA" id="FRTHWQC"/>
<dbReference type="OrthoDB" id="30at9604"/>
<dbReference type="TreeFam" id="TF105633"/>
<dbReference type="Proteomes" id="UP000002277">
    <property type="component" value="Chromosome 9"/>
</dbReference>
<dbReference type="Bgee" id="ENSPTRG00000021319">
    <property type="expression patterns" value="Expressed in heart and 21 other cell types or tissues"/>
</dbReference>
<dbReference type="GO" id="GO:0005743">
    <property type="term" value="C:mitochondrial inner membrane"/>
    <property type="evidence" value="ECO:0007669"/>
    <property type="project" value="UniProtKB-SubCell"/>
</dbReference>
<dbReference type="GO" id="GO:0005758">
    <property type="term" value="C:mitochondrial intermembrane space"/>
    <property type="evidence" value="ECO:0007669"/>
    <property type="project" value="UniProtKB-SubCell"/>
</dbReference>
<dbReference type="GO" id="GO:0005739">
    <property type="term" value="C:mitochondrion"/>
    <property type="evidence" value="ECO:0000250"/>
    <property type="project" value="UniProtKB"/>
</dbReference>
<dbReference type="GO" id="GO:0045271">
    <property type="term" value="C:respiratory chain complex I"/>
    <property type="evidence" value="ECO:0000250"/>
    <property type="project" value="UniProtKB"/>
</dbReference>
<dbReference type="GO" id="GO:0044877">
    <property type="term" value="F:protein-containing complex binding"/>
    <property type="evidence" value="ECO:0007669"/>
    <property type="project" value="Ensembl"/>
</dbReference>
<dbReference type="GO" id="GO:0006120">
    <property type="term" value="P:mitochondrial electron transport, NADH to ubiquinone"/>
    <property type="evidence" value="ECO:0007669"/>
    <property type="project" value="InterPro"/>
</dbReference>
<dbReference type="InterPro" id="IPR010625">
    <property type="entry name" value="CHCH"/>
</dbReference>
<dbReference type="InterPro" id="IPR016680">
    <property type="entry name" value="NDUFA8"/>
</dbReference>
<dbReference type="PANTHER" id="PTHR13344:SF0">
    <property type="entry name" value="NADH DEHYDROGENASE [UBIQUINONE] 1 ALPHA SUBCOMPLEX SUBUNIT 8"/>
    <property type="match status" value="1"/>
</dbReference>
<dbReference type="PANTHER" id="PTHR13344">
    <property type="entry name" value="NADH-UBIQUINONE OXIDOREDUCTASE"/>
    <property type="match status" value="1"/>
</dbReference>
<dbReference type="Pfam" id="PF06747">
    <property type="entry name" value="CHCH"/>
    <property type="match status" value="1"/>
</dbReference>
<dbReference type="PIRSF" id="PIRSF017016">
    <property type="entry name" value="NDUA8"/>
    <property type="match status" value="1"/>
</dbReference>
<dbReference type="PROSITE" id="PS51808">
    <property type="entry name" value="CHCH"/>
    <property type="match status" value="2"/>
</dbReference>
<protein>
    <recommendedName>
        <fullName>NADH dehydrogenase [ubiquinone] 1 alpha subcomplex subunit 8</fullName>
    </recommendedName>
    <alternativeName>
        <fullName>Complex I-19kD</fullName>
        <shortName>CI-19kD</shortName>
    </alternativeName>
    <alternativeName>
        <fullName>NADH-ubiquinone oxidoreductase 19 kDa subunit</fullName>
    </alternativeName>
</protein>
<gene>
    <name type="primary">NDUFA8</name>
</gene>
<organism>
    <name type="scientific">Pan troglodytes</name>
    <name type="common">Chimpanzee</name>
    <dbReference type="NCBI Taxonomy" id="9598"/>
    <lineage>
        <taxon>Eukaryota</taxon>
        <taxon>Metazoa</taxon>
        <taxon>Chordata</taxon>
        <taxon>Craniata</taxon>
        <taxon>Vertebrata</taxon>
        <taxon>Euteleostomi</taxon>
        <taxon>Mammalia</taxon>
        <taxon>Eutheria</taxon>
        <taxon>Euarchontoglires</taxon>
        <taxon>Primates</taxon>
        <taxon>Haplorrhini</taxon>
        <taxon>Catarrhini</taxon>
        <taxon>Hominidae</taxon>
        <taxon>Pan</taxon>
    </lineage>
</organism>
<name>NDUA8_PANTR</name>